<gene>
    <name evidence="1" type="primary">hemL</name>
    <name type="ordered locus">Achl_2485</name>
</gene>
<dbReference type="EC" id="5.4.3.8" evidence="1"/>
<dbReference type="EMBL" id="CP001341">
    <property type="protein sequence ID" value="ACL40450.1"/>
    <property type="molecule type" value="Genomic_DNA"/>
</dbReference>
<dbReference type="RefSeq" id="WP_015937662.1">
    <property type="nucleotide sequence ID" value="NC_011886.1"/>
</dbReference>
<dbReference type="SMR" id="B8HBR2"/>
<dbReference type="STRING" id="452863.Achl_2485"/>
<dbReference type="KEGG" id="ach:Achl_2485"/>
<dbReference type="eggNOG" id="COG0001">
    <property type="taxonomic scope" value="Bacteria"/>
</dbReference>
<dbReference type="HOGENOM" id="CLU_016922_1_5_11"/>
<dbReference type="OrthoDB" id="9801052at2"/>
<dbReference type="UniPathway" id="UPA00251">
    <property type="reaction ID" value="UER00317"/>
</dbReference>
<dbReference type="Proteomes" id="UP000002505">
    <property type="component" value="Chromosome"/>
</dbReference>
<dbReference type="GO" id="GO:0005737">
    <property type="term" value="C:cytoplasm"/>
    <property type="evidence" value="ECO:0007669"/>
    <property type="project" value="UniProtKB-SubCell"/>
</dbReference>
<dbReference type="GO" id="GO:0042286">
    <property type="term" value="F:glutamate-1-semialdehyde 2,1-aminomutase activity"/>
    <property type="evidence" value="ECO:0007669"/>
    <property type="project" value="UniProtKB-UniRule"/>
</dbReference>
<dbReference type="GO" id="GO:0030170">
    <property type="term" value="F:pyridoxal phosphate binding"/>
    <property type="evidence" value="ECO:0007669"/>
    <property type="project" value="InterPro"/>
</dbReference>
<dbReference type="GO" id="GO:0008483">
    <property type="term" value="F:transaminase activity"/>
    <property type="evidence" value="ECO:0007669"/>
    <property type="project" value="InterPro"/>
</dbReference>
<dbReference type="GO" id="GO:0006782">
    <property type="term" value="P:protoporphyrinogen IX biosynthetic process"/>
    <property type="evidence" value="ECO:0007669"/>
    <property type="project" value="UniProtKB-UniRule"/>
</dbReference>
<dbReference type="CDD" id="cd00610">
    <property type="entry name" value="OAT_like"/>
    <property type="match status" value="1"/>
</dbReference>
<dbReference type="FunFam" id="3.40.640.10:FF:000021">
    <property type="entry name" value="Glutamate-1-semialdehyde 2,1-aminomutase"/>
    <property type="match status" value="1"/>
</dbReference>
<dbReference type="Gene3D" id="3.90.1150.10">
    <property type="entry name" value="Aspartate Aminotransferase, domain 1"/>
    <property type="match status" value="1"/>
</dbReference>
<dbReference type="Gene3D" id="3.40.640.10">
    <property type="entry name" value="Type I PLP-dependent aspartate aminotransferase-like (Major domain)"/>
    <property type="match status" value="1"/>
</dbReference>
<dbReference type="HAMAP" id="MF_00375">
    <property type="entry name" value="HemL_aminotrans_3"/>
    <property type="match status" value="1"/>
</dbReference>
<dbReference type="InterPro" id="IPR004639">
    <property type="entry name" value="4pyrrol_synth_GluAld_NH2Trfase"/>
</dbReference>
<dbReference type="InterPro" id="IPR005814">
    <property type="entry name" value="Aminotrans_3"/>
</dbReference>
<dbReference type="InterPro" id="IPR015424">
    <property type="entry name" value="PyrdxlP-dep_Trfase"/>
</dbReference>
<dbReference type="InterPro" id="IPR015421">
    <property type="entry name" value="PyrdxlP-dep_Trfase_major"/>
</dbReference>
<dbReference type="InterPro" id="IPR015422">
    <property type="entry name" value="PyrdxlP-dep_Trfase_small"/>
</dbReference>
<dbReference type="NCBIfam" id="TIGR00713">
    <property type="entry name" value="hemL"/>
    <property type="match status" value="1"/>
</dbReference>
<dbReference type="NCBIfam" id="NF000818">
    <property type="entry name" value="PRK00062.1"/>
    <property type="match status" value="1"/>
</dbReference>
<dbReference type="PANTHER" id="PTHR43713">
    <property type="entry name" value="GLUTAMATE-1-SEMIALDEHYDE 2,1-AMINOMUTASE"/>
    <property type="match status" value="1"/>
</dbReference>
<dbReference type="PANTHER" id="PTHR43713:SF3">
    <property type="entry name" value="GLUTAMATE-1-SEMIALDEHYDE 2,1-AMINOMUTASE 1, CHLOROPLASTIC-RELATED"/>
    <property type="match status" value="1"/>
</dbReference>
<dbReference type="Pfam" id="PF00202">
    <property type="entry name" value="Aminotran_3"/>
    <property type="match status" value="1"/>
</dbReference>
<dbReference type="SUPFAM" id="SSF53383">
    <property type="entry name" value="PLP-dependent transferases"/>
    <property type="match status" value="1"/>
</dbReference>
<name>GSA_PSECP</name>
<keyword id="KW-0963">Cytoplasm</keyword>
<keyword id="KW-0413">Isomerase</keyword>
<keyword id="KW-0627">Porphyrin biosynthesis</keyword>
<keyword id="KW-0663">Pyridoxal phosphate</keyword>
<accession>B8HBR2</accession>
<proteinExistence type="inferred from homology"/>
<reference key="1">
    <citation type="submission" date="2009-01" db="EMBL/GenBank/DDBJ databases">
        <title>Complete sequence of chromosome of Arthrobacter chlorophenolicus A6.</title>
        <authorList>
            <consortium name="US DOE Joint Genome Institute"/>
            <person name="Lucas S."/>
            <person name="Copeland A."/>
            <person name="Lapidus A."/>
            <person name="Glavina del Rio T."/>
            <person name="Tice H."/>
            <person name="Bruce D."/>
            <person name="Goodwin L."/>
            <person name="Pitluck S."/>
            <person name="Goltsman E."/>
            <person name="Clum A."/>
            <person name="Larimer F."/>
            <person name="Land M."/>
            <person name="Hauser L."/>
            <person name="Kyrpides N."/>
            <person name="Mikhailova N."/>
            <person name="Jansson J."/>
            <person name="Richardson P."/>
        </authorList>
    </citation>
    <scope>NUCLEOTIDE SEQUENCE [LARGE SCALE GENOMIC DNA]</scope>
    <source>
        <strain>ATCC 700700 / DSM 12829 / CIP 107037 / JCM 12360 / KCTC 9906 / NCIMB 13794 / A6</strain>
    </source>
</reference>
<feature type="chain" id="PRO_0000382254" description="Glutamate-1-semialdehyde 2,1-aminomutase">
    <location>
        <begin position="1"/>
        <end position="443"/>
    </location>
</feature>
<feature type="modified residue" description="N6-(pyridoxal phosphate)lysine" evidence="1">
    <location>
        <position position="277"/>
    </location>
</feature>
<evidence type="ECO:0000255" key="1">
    <source>
        <dbReference type="HAMAP-Rule" id="MF_00375"/>
    </source>
</evidence>
<protein>
    <recommendedName>
        <fullName evidence="1">Glutamate-1-semialdehyde 2,1-aminomutase</fullName>
        <shortName evidence="1">GSA</shortName>
        <ecNumber evidence="1">5.4.3.8</ecNumber>
    </recommendedName>
    <alternativeName>
        <fullName evidence="1">Glutamate-1-semialdehyde aminotransferase</fullName>
        <shortName evidence="1">GSA-AT</shortName>
    </alternativeName>
</protein>
<sequence length="443" mass="45761">MTSSTPRNEELFDRARQLMPGGVNSPVRAFGSVGGTPRFMVSAKGPYLMDADGNEYVDLVCSWGPALLGHAHPAVLDAVHAAVDRGLSFGASTPDEANLAEIVMERVPAVERLRMVSTGTEATMTAVRLARGFTGRNLIIKFAGCYHGHLDGLLAAAGSGVATLALPGSAGVTEATAAETLVLPYNDLAAVKEAFATHGSNIAAVITEAAPANMGVVTPGEGFNLGLSRITREHGALLIVDEVLTGFRTGYSGYWGLTGGAPDATDPWTPDLLTFGKVIGGGMPTAALGGRADVMDYLAPTGPVYQAGTLSGNPVAMAAGVATLTHATRDVYSYIDVRSLELSSALSSALDAAGVDHSIQFAGNLFSVAFGTSAHGVHNYADAQGQEAFRYAPFFHSMLESGVYLPPSVFEAWFLSAAHDDAAMNRIFDALPAAAKAAAAAQG</sequence>
<organism>
    <name type="scientific">Pseudarthrobacter chlorophenolicus (strain ATCC 700700 / DSM 12829 / CIP 107037 / JCM 12360 / KCTC 9906 / NCIMB 13794 / A6)</name>
    <name type="common">Arthrobacter chlorophenolicus</name>
    <dbReference type="NCBI Taxonomy" id="452863"/>
    <lineage>
        <taxon>Bacteria</taxon>
        <taxon>Bacillati</taxon>
        <taxon>Actinomycetota</taxon>
        <taxon>Actinomycetes</taxon>
        <taxon>Micrococcales</taxon>
        <taxon>Micrococcaceae</taxon>
        <taxon>Pseudarthrobacter</taxon>
    </lineage>
</organism>
<comment type="catalytic activity">
    <reaction evidence="1">
        <text>(S)-4-amino-5-oxopentanoate = 5-aminolevulinate</text>
        <dbReference type="Rhea" id="RHEA:14265"/>
        <dbReference type="ChEBI" id="CHEBI:57501"/>
        <dbReference type="ChEBI" id="CHEBI:356416"/>
        <dbReference type="EC" id="5.4.3.8"/>
    </reaction>
</comment>
<comment type="cofactor">
    <cofactor evidence="1">
        <name>pyridoxal 5'-phosphate</name>
        <dbReference type="ChEBI" id="CHEBI:597326"/>
    </cofactor>
</comment>
<comment type="pathway">
    <text evidence="1">Porphyrin-containing compound metabolism; protoporphyrin-IX biosynthesis; 5-aminolevulinate from L-glutamyl-tRNA(Glu): step 2/2.</text>
</comment>
<comment type="subunit">
    <text evidence="1">Homodimer.</text>
</comment>
<comment type="subcellular location">
    <subcellularLocation>
        <location evidence="1">Cytoplasm</location>
    </subcellularLocation>
</comment>
<comment type="similarity">
    <text evidence="1">Belongs to the class-III pyridoxal-phosphate-dependent aminotransferase family. HemL subfamily.</text>
</comment>